<accession>Q5AUX1</accession>
<accession>C8V4V0</accession>
<evidence type="ECO:0000250" key="1">
    <source>
        <dbReference type="UniProtKB" id="Q5ATJ7"/>
    </source>
</evidence>
<evidence type="ECO:0000250" key="2">
    <source>
        <dbReference type="UniProtKB" id="Q5B0D0"/>
    </source>
</evidence>
<evidence type="ECO:0000255" key="3"/>
<evidence type="ECO:0000255" key="4">
    <source>
        <dbReference type="PROSITE-ProRule" id="PRU00258"/>
    </source>
</evidence>
<evidence type="ECO:0000255" key="5">
    <source>
        <dbReference type="PROSITE-ProRule" id="PRU01348"/>
    </source>
</evidence>
<evidence type="ECO:0000255" key="6">
    <source>
        <dbReference type="PROSITE-ProRule" id="PRU01363"/>
    </source>
</evidence>
<evidence type="ECO:0000255" key="7">
    <source>
        <dbReference type="PROSITE-ProRule" id="PRU10022"/>
    </source>
</evidence>
<evidence type="ECO:0000256" key="8">
    <source>
        <dbReference type="SAM" id="MobiDB-lite"/>
    </source>
</evidence>
<evidence type="ECO:0000269" key="9">
    <source>
    </source>
</evidence>
<evidence type="ECO:0000269" key="10">
    <source>
    </source>
</evidence>
<evidence type="ECO:0000269" key="11">
    <source>
    </source>
</evidence>
<evidence type="ECO:0000269" key="12">
    <source>
    </source>
</evidence>
<evidence type="ECO:0000303" key="13">
    <source>
    </source>
</evidence>
<evidence type="ECO:0000303" key="14">
    <source>
    </source>
</evidence>
<evidence type="ECO:0000305" key="15">
    <source>
    </source>
</evidence>
<keyword id="KW-0511">Multifunctional enzyme</keyword>
<keyword id="KW-0596">Phosphopantetheine</keyword>
<keyword id="KW-0597">Phosphoprotein</keyword>
<keyword id="KW-1185">Reference proteome</keyword>
<keyword id="KW-0677">Repeat</keyword>
<keyword id="KW-0808">Transferase</keyword>
<proteinExistence type="evidence at protein level"/>
<comment type="function">
    <text evidence="9 10">Non-reducing polyketide synthase; part of the gene cluster that mediates the biosynthesis of orsellinic acid, as well as of the cathepsin K inhibitors F9775 A and F9775 B (PubMed:19666480, PubMed:20174687). The non-reducing polyketide synthase orsA produces orsellinic acid by condensing acetyl-CoA with 3 malonyl-CoA units (PubMed:19666480, PubMed:20174687). Further modifications by the decarboxylase orsB and the tyrosinase-like protein orsC lead to the production of F9775 A and F9775 B (PubMed:20174687). The functions of orsD and orsE remain unclear since only orsB and orsC are required to convert orsellinic acid into F9775 A and F9775 B (PubMed:20174687).</text>
</comment>
<comment type="catalytic activity">
    <reaction evidence="9 10">
        <text>3 malonyl-CoA + acetyl-CoA + 2 H(+) = orsellinate + 3 CO2 + 4 CoA</text>
        <dbReference type="Rhea" id="RHEA:62972"/>
        <dbReference type="ChEBI" id="CHEBI:15378"/>
        <dbReference type="ChEBI" id="CHEBI:16162"/>
        <dbReference type="ChEBI" id="CHEBI:16526"/>
        <dbReference type="ChEBI" id="CHEBI:57287"/>
        <dbReference type="ChEBI" id="CHEBI:57288"/>
        <dbReference type="ChEBI" id="CHEBI:57384"/>
    </reaction>
    <physiologicalReaction direction="left-to-right" evidence="9 10">
        <dbReference type="Rhea" id="RHEA:62973"/>
    </physiologicalReaction>
</comment>
<comment type="pathway">
    <text evidence="9 10">Secondary metabolite biosynthesis.</text>
</comment>
<comment type="induction">
    <text evidence="9 11 12">Expression is induced by an intimate physical interaction of the fungal mycelia with the bacterium Streptomyces hygroscopicus (PubMed:19666480). Expression is repressed by VeA and MvlA via histone 3 acetylation by the SAGA/ADA complex (PubMed:23841751, PubMed:23892751).</text>
</comment>
<comment type="domain">
    <text evidence="2">Multidomain protein; including a starter unit:ACP transacylase (SAT) that selects the starter unit; a ketosynthase (KS) that catalyzes repeated decarboxylative condensation to elongate the polyketide backbone; a malonyl-CoA:ACP transacylase (MAT) that selects and transfers the extender unit malonyl-CoA; a product template (PT) domain that controls the immediate cyclization regioselectivity of the reactive polyketide backbone; and an acyl-carrier protein (ACP) that serves as the tether of the growing and completed polyketide via its phosphopantetheinyl arm (By similarity).</text>
</comment>
<comment type="domain">
    <text evidence="1">The release of the polyketide chain from the non-reducing polyketide synthase is mediated by the thioesterase (TE) domain localized at the C-ter of the protein (By similarity).</text>
</comment>
<comment type="disruption phenotype">
    <text evidence="9 10">Abolishes the production of orsellinic acid, lecanoric acid and F-9775A/B (PubMed:19666480, PubMed:20174687).</text>
</comment>
<protein>
    <recommendedName>
        <fullName evidence="13">Orsellinic acid synthase</fullName>
        <shortName evidence="13">OAS</shortName>
        <ecNumber evidence="9 10">2.3.1.-</ecNumber>
    </recommendedName>
    <alternativeName>
        <fullName evidence="14">Non-reducing polyketide synthase orsA</fullName>
    </alternativeName>
    <alternativeName>
        <fullName evidence="13">Orsellinic acid/F9775 biosynthesis cluster protein A</fullName>
    </alternativeName>
</protein>
<organism>
    <name type="scientific">Emericella nidulans (strain FGSC A4 / ATCC 38163 / CBS 112.46 / NRRL 194 / M139)</name>
    <name type="common">Aspergillus nidulans</name>
    <dbReference type="NCBI Taxonomy" id="227321"/>
    <lineage>
        <taxon>Eukaryota</taxon>
        <taxon>Fungi</taxon>
        <taxon>Dikarya</taxon>
        <taxon>Ascomycota</taxon>
        <taxon>Pezizomycotina</taxon>
        <taxon>Eurotiomycetes</taxon>
        <taxon>Eurotiomycetidae</taxon>
        <taxon>Eurotiales</taxon>
        <taxon>Aspergillaceae</taxon>
        <taxon>Aspergillus</taxon>
        <taxon>Aspergillus subgen. Nidulantes</taxon>
    </lineage>
</organism>
<name>ORSA_EMENI</name>
<dbReference type="EC" id="2.3.1.-" evidence="9 10"/>
<dbReference type="EMBL" id="BN001302">
    <property type="protein sequence ID" value="CBF73505.1"/>
    <property type="molecule type" value="Genomic_DNA"/>
</dbReference>
<dbReference type="EMBL" id="AACD01000135">
    <property type="protein sequence ID" value="EAA59563.1"/>
    <property type="molecule type" value="Genomic_DNA"/>
</dbReference>
<dbReference type="RefSeq" id="XP_681178.1">
    <property type="nucleotide sequence ID" value="XM_676086.1"/>
</dbReference>
<dbReference type="SMR" id="Q5AUX1"/>
<dbReference type="STRING" id="227321.Q5AUX1"/>
<dbReference type="ESTHER" id="emeni-q5aux1">
    <property type="family name" value="Thioesterase"/>
</dbReference>
<dbReference type="EnsemblFungi" id="CBF73505">
    <property type="protein sequence ID" value="CBF73505"/>
    <property type="gene ID" value="ANIA_07909"/>
</dbReference>
<dbReference type="KEGG" id="ani:ANIA_07909"/>
<dbReference type="VEuPathDB" id="FungiDB:AN7909"/>
<dbReference type="eggNOG" id="KOG1202">
    <property type="taxonomic scope" value="Eukaryota"/>
</dbReference>
<dbReference type="HOGENOM" id="CLU_000022_6_4_1"/>
<dbReference type="InParanoid" id="Q5AUX1"/>
<dbReference type="OMA" id="EMAYHAL"/>
<dbReference type="OrthoDB" id="329835at2759"/>
<dbReference type="BioCyc" id="MetaCyc:MONOMER-21843"/>
<dbReference type="Proteomes" id="UP000000560">
    <property type="component" value="Chromosome II"/>
</dbReference>
<dbReference type="GO" id="GO:0004315">
    <property type="term" value="F:3-oxoacyl-[acyl-carrier-protein] synthase activity"/>
    <property type="evidence" value="ECO:0007669"/>
    <property type="project" value="InterPro"/>
</dbReference>
<dbReference type="GO" id="GO:0004312">
    <property type="term" value="F:fatty acid synthase activity"/>
    <property type="evidence" value="ECO:0000318"/>
    <property type="project" value="GO_Central"/>
</dbReference>
<dbReference type="GO" id="GO:0031177">
    <property type="term" value="F:phosphopantetheine binding"/>
    <property type="evidence" value="ECO:0007669"/>
    <property type="project" value="InterPro"/>
</dbReference>
<dbReference type="GO" id="GO:1900557">
    <property type="term" value="P:emericellamide biosynthetic process"/>
    <property type="evidence" value="ECO:0000315"/>
    <property type="project" value="AspGD"/>
</dbReference>
<dbReference type="GO" id="GO:1900611">
    <property type="term" value="P:F-9775A biosynthetic process"/>
    <property type="evidence" value="ECO:0000315"/>
    <property type="project" value="AspGD"/>
</dbReference>
<dbReference type="GO" id="GO:1900614">
    <property type="term" value="P:F-9775B biosynthetic process"/>
    <property type="evidence" value="ECO:0000315"/>
    <property type="project" value="AspGD"/>
</dbReference>
<dbReference type="GO" id="GO:0006633">
    <property type="term" value="P:fatty acid biosynthetic process"/>
    <property type="evidence" value="ECO:0000318"/>
    <property type="project" value="GO_Central"/>
</dbReference>
<dbReference type="GO" id="GO:1900815">
    <property type="term" value="P:monodictyphenone biosynthetic process"/>
    <property type="evidence" value="ECO:0000315"/>
    <property type="project" value="AspGD"/>
</dbReference>
<dbReference type="GO" id="GO:1900584">
    <property type="term" value="P:o-orsellinic acid biosynthetic process"/>
    <property type="evidence" value="ECO:0000315"/>
    <property type="project" value="AspGD"/>
</dbReference>
<dbReference type="GO" id="GO:0019748">
    <property type="term" value="P:secondary metabolic process"/>
    <property type="evidence" value="ECO:0000303"/>
    <property type="project" value="AspGD"/>
</dbReference>
<dbReference type="GO" id="GO:0044550">
    <property type="term" value="P:secondary metabolite biosynthetic process"/>
    <property type="evidence" value="ECO:0000318"/>
    <property type="project" value="GO_Central"/>
</dbReference>
<dbReference type="GO" id="GO:0045461">
    <property type="term" value="P:sterigmatocystin biosynthetic process"/>
    <property type="evidence" value="ECO:0000315"/>
    <property type="project" value="AspGD"/>
</dbReference>
<dbReference type="GO" id="GO:1900590">
    <property type="term" value="P:violaceol I biosynthetic process"/>
    <property type="evidence" value="ECO:0000315"/>
    <property type="project" value="AspGD"/>
</dbReference>
<dbReference type="GO" id="GO:1900593">
    <property type="term" value="P:violaceol II biosynthetic process"/>
    <property type="evidence" value="ECO:0000315"/>
    <property type="project" value="AspGD"/>
</dbReference>
<dbReference type="CDD" id="cd00833">
    <property type="entry name" value="PKS"/>
    <property type="match status" value="1"/>
</dbReference>
<dbReference type="FunFam" id="3.40.47.10:FF:000146">
    <property type="entry name" value="Orsellinic acid synthase"/>
    <property type="match status" value="1"/>
</dbReference>
<dbReference type="FunFam" id="3.40.366.10:FF:000002">
    <property type="entry name" value="Probable polyketide synthase 2"/>
    <property type="match status" value="1"/>
</dbReference>
<dbReference type="Gene3D" id="3.30.70.3290">
    <property type="match status" value="1"/>
</dbReference>
<dbReference type="Gene3D" id="3.40.47.10">
    <property type="match status" value="1"/>
</dbReference>
<dbReference type="Gene3D" id="1.10.1200.10">
    <property type="entry name" value="ACP-like"/>
    <property type="match status" value="2"/>
</dbReference>
<dbReference type="Gene3D" id="3.40.50.1820">
    <property type="entry name" value="alpha/beta hydrolase"/>
    <property type="match status" value="1"/>
</dbReference>
<dbReference type="Gene3D" id="3.40.366.10">
    <property type="entry name" value="Malonyl-Coenzyme A Acyl Carrier Protein, domain 2"/>
    <property type="match status" value="2"/>
</dbReference>
<dbReference type="Gene3D" id="3.10.129.110">
    <property type="entry name" value="Polyketide synthase dehydratase"/>
    <property type="match status" value="1"/>
</dbReference>
<dbReference type="InterPro" id="IPR029058">
    <property type="entry name" value="AB_hydrolase_fold"/>
</dbReference>
<dbReference type="InterPro" id="IPR001227">
    <property type="entry name" value="Ac_transferase_dom_sf"/>
</dbReference>
<dbReference type="InterPro" id="IPR036736">
    <property type="entry name" value="ACP-like_sf"/>
</dbReference>
<dbReference type="InterPro" id="IPR014043">
    <property type="entry name" value="Acyl_transferase_dom"/>
</dbReference>
<dbReference type="InterPro" id="IPR016035">
    <property type="entry name" value="Acyl_Trfase/lysoPLipase"/>
</dbReference>
<dbReference type="InterPro" id="IPR018201">
    <property type="entry name" value="Ketoacyl_synth_AS"/>
</dbReference>
<dbReference type="InterPro" id="IPR014031">
    <property type="entry name" value="Ketoacyl_synth_C"/>
</dbReference>
<dbReference type="InterPro" id="IPR014030">
    <property type="entry name" value="Ketoacyl_synth_N"/>
</dbReference>
<dbReference type="InterPro" id="IPR016036">
    <property type="entry name" value="Malonyl_transacylase_ACP-bd"/>
</dbReference>
<dbReference type="InterPro" id="IPR020841">
    <property type="entry name" value="PKS_Beta-ketoAc_synthase_dom"/>
</dbReference>
<dbReference type="InterPro" id="IPR042104">
    <property type="entry name" value="PKS_dehydratase_sf"/>
</dbReference>
<dbReference type="InterPro" id="IPR049551">
    <property type="entry name" value="PKS_DH_C"/>
</dbReference>
<dbReference type="InterPro" id="IPR049900">
    <property type="entry name" value="PKS_mFAS_DH"/>
</dbReference>
<dbReference type="InterPro" id="IPR050091">
    <property type="entry name" value="PKS_NRPS_Biosynth_Enz"/>
</dbReference>
<dbReference type="InterPro" id="IPR020806">
    <property type="entry name" value="PKS_PP-bd"/>
</dbReference>
<dbReference type="InterPro" id="IPR009081">
    <property type="entry name" value="PP-bd_ACP"/>
</dbReference>
<dbReference type="InterPro" id="IPR006162">
    <property type="entry name" value="Ppantetheine_attach_site"/>
</dbReference>
<dbReference type="InterPro" id="IPR030918">
    <property type="entry name" value="PT_fungal_PKS"/>
</dbReference>
<dbReference type="InterPro" id="IPR032088">
    <property type="entry name" value="SAT"/>
</dbReference>
<dbReference type="InterPro" id="IPR001031">
    <property type="entry name" value="Thioesterase"/>
</dbReference>
<dbReference type="InterPro" id="IPR016039">
    <property type="entry name" value="Thiolase-like"/>
</dbReference>
<dbReference type="NCBIfam" id="TIGR04532">
    <property type="entry name" value="PT_fungal_PKS"/>
    <property type="match status" value="1"/>
</dbReference>
<dbReference type="PANTHER" id="PTHR43775">
    <property type="entry name" value="FATTY ACID SYNTHASE"/>
    <property type="match status" value="1"/>
</dbReference>
<dbReference type="PANTHER" id="PTHR43775:SF37">
    <property type="entry name" value="SI:DKEY-61P9.11"/>
    <property type="match status" value="1"/>
</dbReference>
<dbReference type="Pfam" id="PF00698">
    <property type="entry name" value="Acyl_transf_1"/>
    <property type="match status" value="1"/>
</dbReference>
<dbReference type="Pfam" id="PF22621">
    <property type="entry name" value="CurL-like_PKS_C"/>
    <property type="match status" value="1"/>
</dbReference>
<dbReference type="Pfam" id="PF00109">
    <property type="entry name" value="ketoacyl-synt"/>
    <property type="match status" value="1"/>
</dbReference>
<dbReference type="Pfam" id="PF02801">
    <property type="entry name" value="Ketoacyl-synt_C"/>
    <property type="match status" value="1"/>
</dbReference>
<dbReference type="Pfam" id="PF00550">
    <property type="entry name" value="PP-binding"/>
    <property type="match status" value="2"/>
</dbReference>
<dbReference type="Pfam" id="PF14765">
    <property type="entry name" value="PS-DH"/>
    <property type="match status" value="1"/>
</dbReference>
<dbReference type="Pfam" id="PF16073">
    <property type="entry name" value="SAT"/>
    <property type="match status" value="1"/>
</dbReference>
<dbReference type="Pfam" id="PF00975">
    <property type="entry name" value="Thioesterase"/>
    <property type="match status" value="1"/>
</dbReference>
<dbReference type="SMART" id="SM00827">
    <property type="entry name" value="PKS_AT"/>
    <property type="match status" value="1"/>
</dbReference>
<dbReference type="SMART" id="SM00825">
    <property type="entry name" value="PKS_KS"/>
    <property type="match status" value="1"/>
</dbReference>
<dbReference type="SMART" id="SM00823">
    <property type="entry name" value="PKS_PP"/>
    <property type="match status" value="2"/>
</dbReference>
<dbReference type="SUPFAM" id="SSF47336">
    <property type="entry name" value="ACP-like"/>
    <property type="match status" value="2"/>
</dbReference>
<dbReference type="SUPFAM" id="SSF53474">
    <property type="entry name" value="alpha/beta-Hydrolases"/>
    <property type="match status" value="1"/>
</dbReference>
<dbReference type="SUPFAM" id="SSF52151">
    <property type="entry name" value="FabD/lysophospholipase-like"/>
    <property type="match status" value="1"/>
</dbReference>
<dbReference type="SUPFAM" id="SSF55048">
    <property type="entry name" value="Probable ACP-binding domain of malonyl-CoA ACP transacylase"/>
    <property type="match status" value="1"/>
</dbReference>
<dbReference type="SUPFAM" id="SSF53901">
    <property type="entry name" value="Thiolase-like"/>
    <property type="match status" value="1"/>
</dbReference>
<dbReference type="PROSITE" id="PS50075">
    <property type="entry name" value="CARRIER"/>
    <property type="match status" value="2"/>
</dbReference>
<dbReference type="PROSITE" id="PS00606">
    <property type="entry name" value="KS3_1"/>
    <property type="match status" value="1"/>
</dbReference>
<dbReference type="PROSITE" id="PS52004">
    <property type="entry name" value="KS3_2"/>
    <property type="match status" value="1"/>
</dbReference>
<dbReference type="PROSITE" id="PS00012">
    <property type="entry name" value="PHOSPHOPANTETHEINE"/>
    <property type="match status" value="1"/>
</dbReference>
<dbReference type="PROSITE" id="PS52019">
    <property type="entry name" value="PKS_MFAS_DH"/>
    <property type="match status" value="1"/>
</dbReference>
<sequence>MAPNHVLFFPQERVTFDAVHDLNVRSKSRRRLQSLLAAASNVVQHWTASLDGLERADIGSFEDLVELAERQTTQTRGSIVADLVLLTTVQIGQLLVLAEDDPAILSGHAGARAIPMGFGAGLVAAGVAAAATSADGIVNLGLEAVSVAFRLGVELQRRGKDIEDSNGPWAQVISSATTIADLEQALDRINASLRPINQAYIGEVMTESTVVFGPPSTLDALAKRPELAHATITSPASALAQVPLHGAHLPPISATMIAASSSQQATELWKLAVEEVANKPIDVHQAVTALIHDLHRANITDIVLTAIGASTETSGIQSLLEKNGLAVELGQLSPTPRPYGNDLDSIPADAIAVVGMSGRFPNSDTLDEFWRLLETATTTHQVIPESRFNVDDFYDPTRAKHNALLARYGCFLKNPGDFDHRLFNISPREAMQMDPVQRMLLMTTYEALEMAGYSPPTPAAPGDSEQAPPRIATYFGQTIDDWKSINDQQGIDTHYLPGVNRGFAPGRLSHFFQWAGGFYSIDTGCSSSATALCLARDALTAGKYDAAVVGGGTLLTAPEWFAGLSQGGFLSPTGACKTYSDSADGYCRGEGVGVVILKRLADAVRSKDNVIAVIAGASRNCNAGAGSITYPGEKAQGALYRRVMRQAAVRPEQVDVVEMHGTGTQAGDRVETHAVQSVFAPSNGNQREKPLIVGALKANIGHSEAAAGIISLMKAILILQHDKIPAQPNQPIKMNPYLEPLIGKQIQLANGQSWTRNGAEPRYIFVNNFDAAGGNVSMLLQDPPAFALPAPASGPGLRTHHVVVTSGRTATAHEANRKRLHAYLSAHPDTNLADLAYTTTARRIHNVHREAYVASSTSDLVRQLEKPLADKVESAPPPAVVFTFTGQGAQSLGMGGALYSTSPTFRRLLDSLQSICEVQGLPTKFLNAIRGSGAEGATVTEVDMQVATVALEIALARYWRSLGIRPTVLIGHSLGEYAALCVAGVLSASDALALAFRRATLIFTRCPPSEAAMLAVGLPMRTVQYRIRDSAATTGCEVCCVNGPSSTVVGGPVAAIQALDEYLKSDGKVSTTRLRVQHAFHTRQMDVLLDELEASAAQVPFHAPTLPVASTVLGRIVRPGEQGVFDANYLRRHTREPVAFLDAVRACETEGLIPDRSFAVEIGPHPICISLMATCLQSAKINAWPSLRRGGDDWQSVSSTLAAAHSAQLPVAWSEFHKDHLDTVRLISDLPTYAFDLKTFWHSYKTPAAAVSAASATPSTTGLSRLASTTLHAVEKLQREEGKILGTFTVDLSDPKLAKAICGHVVDESAICPASIFIDMAYTAAVFLEQENGAGAALNTYELSSLEMHSPLVLREDIEVLPQVWVEAVLDIKSNAVSVHFKGQTSKGAVGYGSATMRLGQPDSAVRRDWSRIQSLVRARVQTLNRSVRPREVHAMDTALFYKVFSEIVDYSAPYHAVQEAVIAADFHDAAVTLQLTPTADLGTFTSSPFAVDALVHVAGFLLNADVRRPKNEVHIANHIGSLRIVGDLSSPGPYHVYATIREQDQKAGTSLCDVYTTDSQDRLVAVCSDICFKKLERDFFALLTGATRGRSTKPVAAAPAKSMAKRARQLAPSPSPSSSSGSNTPMSRSPTPSSVSDMVDLGTELLQAVAEQTGVSVAEMKSSPGTTFTEFGVDSQMAISILANFQRTTAVELPAAFFTNFPTPADAEAELGGSALDDLEEDITKPTPSPEQTQARKQGPAPSQHLLSLVAQALGLEASDLTPSTTFDSVGMDSMLSIKITAAFHAKTGIELPAAFFSANPTVGAAQEALDDDAEEESAPAQTSTNPAKETTIDSSRQHKLDAAVSRASYIHLKALPKGRRIYALESPFLEQPELFDLSIEEMATIFLRTIRRIQPHGPYLIGGWSAGSMYAYEVAHRLTREGETIQALIILDMRAPSLIPTSIVTTDFVDKLGTFEGINRARDLPEDLSVKERAHLMATCRALSRYDAPAFPSDRQPKQVAVVWALLGLDNRPDAPIASMGRPGLDIGKSMYEMNLDEFERYFNSWFYGRRQQFGTNGWEDLLGDHIAVYTVNGDHFSMMCPPYASEVGDIVIETVTRAVE</sequence>
<feature type="chain" id="PRO_0000438572" description="Orsellinic acid synthase">
    <location>
        <begin position="1"/>
        <end position="2103"/>
    </location>
</feature>
<feature type="domain" description="Ketosynthase family 3 (KS3)" evidence="5 15">
    <location>
        <begin position="348"/>
        <end position="782"/>
    </location>
</feature>
<feature type="domain" description="PKS/mFAS DH" evidence="6">
    <location>
        <begin position="1272"/>
        <end position="1582"/>
    </location>
</feature>
<feature type="domain" description="Carrier 1" evidence="4">
    <location>
        <begin position="1640"/>
        <end position="1716"/>
    </location>
</feature>
<feature type="domain" description="Carrier 2" evidence="4">
    <location>
        <begin position="1741"/>
        <end position="1815"/>
    </location>
</feature>
<feature type="region of interest" description="N-terminal acylcarrier protein transacylase domain (SAT)" evidence="3 15">
    <location>
        <begin position="17"/>
        <end position="232"/>
    </location>
</feature>
<feature type="region of interest" description="Malonyl-CoA:ACP transacylase (MAT) domain" evidence="3 15">
    <location>
        <begin position="881"/>
        <end position="1197"/>
    </location>
</feature>
<feature type="region of interest" description="N-terminal hotdog fold" evidence="6">
    <location>
        <begin position="1272"/>
        <end position="1409"/>
    </location>
</feature>
<feature type="region of interest" description="Product template (PT) domain" evidence="3 15">
    <location>
        <begin position="1303"/>
        <end position="1579"/>
    </location>
</feature>
<feature type="region of interest" description="C-terminal hotdog fold" evidence="6">
    <location>
        <begin position="1433"/>
        <end position="1582"/>
    </location>
</feature>
<feature type="region of interest" description="Disordered" evidence="8">
    <location>
        <begin position="1592"/>
        <end position="1638"/>
    </location>
</feature>
<feature type="region of interest" description="Disordered" evidence="8">
    <location>
        <begin position="1722"/>
        <end position="1743"/>
    </location>
</feature>
<feature type="region of interest" description="Disordered" evidence="8">
    <location>
        <begin position="1809"/>
        <end position="1838"/>
    </location>
</feature>
<feature type="region of interest" description="Thioesterase (TE) domain" evidence="3 15">
    <location>
        <begin position="1849"/>
        <end position="2082"/>
    </location>
</feature>
<feature type="compositionally biased region" description="Low complexity" evidence="8">
    <location>
        <begin position="1594"/>
        <end position="1603"/>
    </location>
</feature>
<feature type="compositionally biased region" description="Low complexity" evidence="8">
    <location>
        <begin position="1617"/>
        <end position="1631"/>
    </location>
</feature>
<feature type="compositionally biased region" description="Acidic residues" evidence="8">
    <location>
        <begin position="1810"/>
        <end position="1819"/>
    </location>
</feature>
<feature type="compositionally biased region" description="Polar residues" evidence="8">
    <location>
        <begin position="1823"/>
        <end position="1836"/>
    </location>
</feature>
<feature type="active site" description="For beta-ketoacyl synthase activity" evidence="5">
    <location>
        <position position="525"/>
    </location>
</feature>
<feature type="active site" description="For beta-ketoacyl synthase activity" evidence="5">
    <location>
        <position position="660"/>
    </location>
</feature>
<feature type="active site" description="For beta-ketoacyl synthase activity" evidence="5">
    <location>
        <position position="702"/>
    </location>
</feature>
<feature type="active site" description="For acyl/malonyl transferase activity" evidence="7">
    <location>
        <position position="973"/>
    </location>
</feature>
<feature type="active site" description="Proton acceptor; for dehydratase activity" evidence="6">
    <location>
        <position position="1304"/>
    </location>
</feature>
<feature type="active site" description="Proton donor; for dehydratase activity" evidence="6">
    <location>
        <position position="1493"/>
    </location>
</feature>
<feature type="modified residue" description="O-(pantetheine 4'-phosphoryl)serine" evidence="4">
    <location>
        <position position="1676"/>
    </location>
</feature>
<feature type="modified residue" description="O-(pantetheine 4'-phosphoryl)serine" evidence="4">
    <location>
        <position position="1775"/>
    </location>
</feature>
<gene>
    <name evidence="13" type="primary">orsA</name>
    <name type="ORF">AN7909</name>
</gene>
<reference key="1">
    <citation type="journal article" date="2005" name="Nature">
        <title>Sequencing of Aspergillus nidulans and comparative analysis with A. fumigatus and A. oryzae.</title>
        <authorList>
            <person name="Galagan J.E."/>
            <person name="Calvo S.E."/>
            <person name="Cuomo C."/>
            <person name="Ma L.-J."/>
            <person name="Wortman J.R."/>
            <person name="Batzoglou S."/>
            <person name="Lee S.-I."/>
            <person name="Bastuerkmen M."/>
            <person name="Spevak C.C."/>
            <person name="Clutterbuck J."/>
            <person name="Kapitonov V."/>
            <person name="Jurka J."/>
            <person name="Scazzocchio C."/>
            <person name="Farman M.L."/>
            <person name="Butler J."/>
            <person name="Purcell S."/>
            <person name="Harris S."/>
            <person name="Braus G.H."/>
            <person name="Draht O."/>
            <person name="Busch S."/>
            <person name="D'Enfert C."/>
            <person name="Bouchier C."/>
            <person name="Goldman G.H."/>
            <person name="Bell-Pedersen D."/>
            <person name="Griffiths-Jones S."/>
            <person name="Doonan J.H."/>
            <person name="Yu J."/>
            <person name="Vienken K."/>
            <person name="Pain A."/>
            <person name="Freitag M."/>
            <person name="Selker E.U."/>
            <person name="Archer D.B."/>
            <person name="Penalva M.A."/>
            <person name="Oakley B.R."/>
            <person name="Momany M."/>
            <person name="Tanaka T."/>
            <person name="Kumagai T."/>
            <person name="Asai K."/>
            <person name="Machida M."/>
            <person name="Nierman W.C."/>
            <person name="Denning D.W."/>
            <person name="Caddick M.X."/>
            <person name="Hynes M."/>
            <person name="Paoletti M."/>
            <person name="Fischer R."/>
            <person name="Miller B.L."/>
            <person name="Dyer P.S."/>
            <person name="Sachs M.S."/>
            <person name="Osmani S.A."/>
            <person name="Birren B.W."/>
        </authorList>
    </citation>
    <scope>NUCLEOTIDE SEQUENCE [LARGE SCALE GENOMIC DNA]</scope>
    <source>
        <strain>FGSC A4 / ATCC 38163 / CBS 112.46 / NRRL 194 / M139</strain>
    </source>
</reference>
<reference key="2">
    <citation type="journal article" date="2009" name="Fungal Genet. Biol.">
        <title>The 2008 update of the Aspergillus nidulans genome annotation: a community effort.</title>
        <authorList>
            <person name="Wortman J.R."/>
            <person name="Gilsenan J.M."/>
            <person name="Joardar V."/>
            <person name="Deegan J."/>
            <person name="Clutterbuck J."/>
            <person name="Andersen M.R."/>
            <person name="Archer D."/>
            <person name="Bencina M."/>
            <person name="Braus G."/>
            <person name="Coutinho P."/>
            <person name="von Dohren H."/>
            <person name="Doonan J."/>
            <person name="Driessen A.J."/>
            <person name="Durek P."/>
            <person name="Espeso E."/>
            <person name="Fekete E."/>
            <person name="Flipphi M."/>
            <person name="Estrada C.G."/>
            <person name="Geysens S."/>
            <person name="Goldman G."/>
            <person name="de Groot P.W."/>
            <person name="Hansen K."/>
            <person name="Harris S.D."/>
            <person name="Heinekamp T."/>
            <person name="Helmstaedt K."/>
            <person name="Henrissat B."/>
            <person name="Hofmann G."/>
            <person name="Homan T."/>
            <person name="Horio T."/>
            <person name="Horiuchi H."/>
            <person name="James S."/>
            <person name="Jones M."/>
            <person name="Karaffa L."/>
            <person name="Karanyi Z."/>
            <person name="Kato M."/>
            <person name="Keller N."/>
            <person name="Kelly D.E."/>
            <person name="Kiel J.A."/>
            <person name="Kim J.M."/>
            <person name="van der Klei I.J."/>
            <person name="Klis F.M."/>
            <person name="Kovalchuk A."/>
            <person name="Krasevec N."/>
            <person name="Kubicek C.P."/>
            <person name="Liu B."/>
            <person name="Maccabe A."/>
            <person name="Meyer V."/>
            <person name="Mirabito P."/>
            <person name="Miskei M."/>
            <person name="Mos M."/>
            <person name="Mullins J."/>
            <person name="Nelson D.R."/>
            <person name="Nielsen J."/>
            <person name="Oakley B.R."/>
            <person name="Osmani S.A."/>
            <person name="Pakula T."/>
            <person name="Paszewski A."/>
            <person name="Paulsen I."/>
            <person name="Pilsyk S."/>
            <person name="Pocsi I."/>
            <person name="Punt P.J."/>
            <person name="Ram A.F."/>
            <person name="Ren Q."/>
            <person name="Robellet X."/>
            <person name="Robson G."/>
            <person name="Seiboth B."/>
            <person name="van Solingen P."/>
            <person name="Specht T."/>
            <person name="Sun J."/>
            <person name="Taheri-Talesh N."/>
            <person name="Takeshita N."/>
            <person name="Ussery D."/>
            <person name="vanKuyk P.A."/>
            <person name="Visser H."/>
            <person name="van de Vondervoort P.J."/>
            <person name="de Vries R.P."/>
            <person name="Walton J."/>
            <person name="Xiang X."/>
            <person name="Xiong Y."/>
            <person name="Zeng A.P."/>
            <person name="Brandt B.W."/>
            <person name="Cornell M.J."/>
            <person name="van den Hondel C.A."/>
            <person name="Visser J."/>
            <person name="Oliver S.G."/>
            <person name="Turner G."/>
        </authorList>
    </citation>
    <scope>GENOME REANNOTATION</scope>
    <source>
        <strain>FGSC A4 / ATCC 38163 / CBS 112.46 / NRRL 194 / M139</strain>
    </source>
</reference>
<reference key="3">
    <citation type="journal article" date="2009" name="Nat. Chem. Biol.">
        <title>Chromatin-level regulation of biosynthetic gene clusters.</title>
        <authorList>
            <person name="Bok J.W."/>
            <person name="Chiang Y.M."/>
            <person name="Szewczyk E."/>
            <person name="Reyes-Dominguez Y."/>
            <person name="Davidson A.D."/>
            <person name="Sanchez J.F."/>
            <person name="Lo H.C."/>
            <person name="Watanabe K."/>
            <person name="Strauss J."/>
            <person name="Oakley B.R."/>
            <person name="Wang C.C."/>
            <person name="Keller N.P."/>
        </authorList>
    </citation>
    <scope>INDUCTION</scope>
</reference>
<reference key="4">
    <citation type="journal article" date="2009" name="Proc. Natl. Acad. Sci. U.S.A.">
        <title>Intimate bacterial-fungal interaction triggers biosynthesis of archetypal polyketides in Aspergillus nidulans.</title>
        <authorList>
            <person name="Schroeckh V."/>
            <person name="Scherlach K."/>
            <person name="Nuetzmann H.W."/>
            <person name="Shelest E."/>
            <person name="Schmidt-Heck W."/>
            <person name="Schuemann J."/>
            <person name="Martin K."/>
            <person name="Hertweck C."/>
            <person name="Brakhage A.A."/>
        </authorList>
    </citation>
    <scope>IDENTIFICATION OF THE ORS CLUSTER</scope>
    <scope>INDUCTION</scope>
    <scope>FUNCTION</scope>
    <scope>DISRUPTION PHENOTYPE</scope>
    <scope>CATALYTIC ACTIVITY</scope>
    <scope>PATHWAY</scope>
</reference>
<reference key="5">
    <citation type="journal article" date="2010" name="Mol. Biosyst.">
        <title>Molecular genetic analysis of the orsellinic acid/F9775 gene cluster of Aspergillus nidulans.</title>
        <authorList>
            <person name="Sanchez J.F."/>
            <person name="Chiang Y.M."/>
            <person name="Szewczyk E."/>
            <person name="Davidson A.D."/>
            <person name="Ahuja M."/>
            <person name="Elizabeth Oakley C."/>
            <person name="Woo Bok J."/>
            <person name="Keller N."/>
            <person name="Oakley B.R."/>
            <person name="Wang C.C."/>
        </authorList>
    </citation>
    <scope>FUNCTION</scope>
    <scope>DISRUPTION PHENOTYPE</scope>
    <scope>DOMAIN</scope>
    <scope>CATALYTIC ACTIVITY</scope>
    <scope>PATHWAY</scope>
</reference>
<reference key="6">
    <citation type="journal article" date="2013" name="Appl. Environ. Microbiol.">
        <title>Distinct amino acids of histone H3 control secondary metabolism in Aspergillus nidulans.</title>
        <authorList>
            <person name="Nuetzmann H.W."/>
            <person name="Fischer J."/>
            <person name="Scherlach K."/>
            <person name="Hertweck C."/>
            <person name="Brakhage A.A."/>
        </authorList>
    </citation>
    <scope>INDUCTION</scope>
</reference>
<reference key="7">
    <citation type="journal article" date="2013" name="Mol. Microbiol.">
        <title>VeA and MvlA repression of the cryptic orsellinic acid gene cluster in Aspergillus nidulans involves histone 3 acetylation.</title>
        <authorList>
            <person name="Bok J.W."/>
            <person name="Soukup A.A."/>
            <person name="Chadwick E."/>
            <person name="Chiang Y.M."/>
            <person name="Wang C.C."/>
            <person name="Keller N.P."/>
        </authorList>
    </citation>
    <scope>INDUCTION</scope>
</reference>